<organism>
    <name type="scientific">Moorella thermoacetica (strain ATCC 39073 / JCM 9320)</name>
    <dbReference type="NCBI Taxonomy" id="264732"/>
    <lineage>
        <taxon>Bacteria</taxon>
        <taxon>Bacillati</taxon>
        <taxon>Bacillota</taxon>
        <taxon>Clostridia</taxon>
        <taxon>Moorellales</taxon>
        <taxon>Moorellaceae</taxon>
        <taxon>Moorella</taxon>
    </lineage>
</organism>
<proteinExistence type="inferred from homology"/>
<keyword id="KW-0067">ATP-binding</keyword>
<keyword id="KW-0436">Ligase</keyword>
<keyword id="KW-0547">Nucleotide-binding</keyword>
<keyword id="KW-0648">Protein biosynthesis</keyword>
<protein>
    <recommendedName>
        <fullName evidence="1">Aspartyl/glutamyl-tRNA(Asn/Gln) amidotransferase subunit B</fullName>
        <shortName evidence="1">Asp/Glu-ADT subunit B</shortName>
        <ecNumber evidence="1">6.3.5.-</ecNumber>
    </recommendedName>
</protein>
<evidence type="ECO:0000255" key="1">
    <source>
        <dbReference type="HAMAP-Rule" id="MF_00121"/>
    </source>
</evidence>
<reference key="1">
    <citation type="journal article" date="2008" name="Environ. Microbiol.">
        <title>The complete genome sequence of Moorella thermoacetica (f. Clostridium thermoaceticum).</title>
        <authorList>
            <person name="Pierce E."/>
            <person name="Xie G."/>
            <person name="Barabote R.D."/>
            <person name="Saunders E."/>
            <person name="Han C.S."/>
            <person name="Detter J.C."/>
            <person name="Richardson P."/>
            <person name="Brettin T.S."/>
            <person name="Das A."/>
            <person name="Ljungdahl L.G."/>
            <person name="Ragsdale S.W."/>
        </authorList>
    </citation>
    <scope>NUCLEOTIDE SEQUENCE [LARGE SCALE GENOMIC DNA]</scope>
    <source>
        <strain>ATCC 39073 / JCM 9320</strain>
    </source>
</reference>
<accession>Q2RGY5</accession>
<feature type="chain" id="PRO_0000241239" description="Aspartyl/glutamyl-tRNA(Asn/Gln) amidotransferase subunit B">
    <location>
        <begin position="1"/>
        <end position="476"/>
    </location>
</feature>
<name>GATB_MOOTA</name>
<gene>
    <name evidence="1" type="primary">gatB</name>
    <name type="ordered locus">Moth_2008</name>
</gene>
<dbReference type="EC" id="6.3.5.-" evidence="1"/>
<dbReference type="EMBL" id="CP000232">
    <property type="protein sequence ID" value="ABC20304.1"/>
    <property type="molecule type" value="Genomic_DNA"/>
</dbReference>
<dbReference type="RefSeq" id="YP_430847.1">
    <property type="nucleotide sequence ID" value="NC_007644.1"/>
</dbReference>
<dbReference type="SMR" id="Q2RGY5"/>
<dbReference type="STRING" id="264732.Moth_2008"/>
<dbReference type="EnsemblBacteria" id="ABC20304">
    <property type="protein sequence ID" value="ABC20304"/>
    <property type="gene ID" value="Moth_2008"/>
</dbReference>
<dbReference type="KEGG" id="mta:Moth_2008"/>
<dbReference type="PATRIC" id="fig|264732.11.peg.2177"/>
<dbReference type="eggNOG" id="COG0064">
    <property type="taxonomic scope" value="Bacteria"/>
</dbReference>
<dbReference type="HOGENOM" id="CLU_019240_0_0_9"/>
<dbReference type="OrthoDB" id="9804078at2"/>
<dbReference type="GO" id="GO:0050566">
    <property type="term" value="F:asparaginyl-tRNA synthase (glutamine-hydrolyzing) activity"/>
    <property type="evidence" value="ECO:0007669"/>
    <property type="project" value="RHEA"/>
</dbReference>
<dbReference type="GO" id="GO:0005524">
    <property type="term" value="F:ATP binding"/>
    <property type="evidence" value="ECO:0007669"/>
    <property type="project" value="UniProtKB-KW"/>
</dbReference>
<dbReference type="GO" id="GO:0050567">
    <property type="term" value="F:glutaminyl-tRNA synthase (glutamine-hydrolyzing) activity"/>
    <property type="evidence" value="ECO:0007669"/>
    <property type="project" value="UniProtKB-UniRule"/>
</dbReference>
<dbReference type="GO" id="GO:0070681">
    <property type="term" value="P:glutaminyl-tRNAGln biosynthesis via transamidation"/>
    <property type="evidence" value="ECO:0007669"/>
    <property type="project" value="TreeGrafter"/>
</dbReference>
<dbReference type="GO" id="GO:0006412">
    <property type="term" value="P:translation"/>
    <property type="evidence" value="ECO:0007669"/>
    <property type="project" value="UniProtKB-UniRule"/>
</dbReference>
<dbReference type="FunFam" id="1.10.10.410:FF:000001">
    <property type="entry name" value="Aspartyl/glutamyl-tRNA(Asn/Gln) amidotransferase subunit B"/>
    <property type="match status" value="1"/>
</dbReference>
<dbReference type="FunFam" id="1.10.150.380:FF:000001">
    <property type="entry name" value="Aspartyl/glutamyl-tRNA(Asn/Gln) amidotransferase subunit B"/>
    <property type="match status" value="1"/>
</dbReference>
<dbReference type="Gene3D" id="1.10.10.410">
    <property type="match status" value="1"/>
</dbReference>
<dbReference type="Gene3D" id="1.10.150.380">
    <property type="entry name" value="GatB domain, N-terminal subdomain"/>
    <property type="match status" value="1"/>
</dbReference>
<dbReference type="HAMAP" id="MF_00121">
    <property type="entry name" value="GatB"/>
    <property type="match status" value="1"/>
</dbReference>
<dbReference type="InterPro" id="IPR017959">
    <property type="entry name" value="Asn/Gln-tRNA_amidoTrfase_suB/E"/>
</dbReference>
<dbReference type="InterPro" id="IPR006075">
    <property type="entry name" value="Asn/Gln-tRNA_Trfase_suB/E_cat"/>
</dbReference>
<dbReference type="InterPro" id="IPR018027">
    <property type="entry name" value="Asn/Gln_amidotransferase"/>
</dbReference>
<dbReference type="InterPro" id="IPR003789">
    <property type="entry name" value="Asn/Gln_tRNA_amidoTrase-B-like"/>
</dbReference>
<dbReference type="InterPro" id="IPR004413">
    <property type="entry name" value="GatB"/>
</dbReference>
<dbReference type="InterPro" id="IPR042114">
    <property type="entry name" value="GatB_C_1"/>
</dbReference>
<dbReference type="InterPro" id="IPR023168">
    <property type="entry name" value="GatB_Yqey_C_2"/>
</dbReference>
<dbReference type="InterPro" id="IPR017958">
    <property type="entry name" value="Gln-tRNA_amidoTrfase_suB_CS"/>
</dbReference>
<dbReference type="InterPro" id="IPR014746">
    <property type="entry name" value="Gln_synth/guanido_kin_cat_dom"/>
</dbReference>
<dbReference type="NCBIfam" id="TIGR00133">
    <property type="entry name" value="gatB"/>
    <property type="match status" value="1"/>
</dbReference>
<dbReference type="NCBIfam" id="NF004012">
    <property type="entry name" value="PRK05477.1-2"/>
    <property type="match status" value="1"/>
</dbReference>
<dbReference type="NCBIfam" id="NF004014">
    <property type="entry name" value="PRK05477.1-4"/>
    <property type="match status" value="1"/>
</dbReference>
<dbReference type="NCBIfam" id="NF004015">
    <property type="entry name" value="PRK05477.1-5"/>
    <property type="match status" value="1"/>
</dbReference>
<dbReference type="PANTHER" id="PTHR11659">
    <property type="entry name" value="GLUTAMYL-TRNA GLN AMIDOTRANSFERASE SUBUNIT B MITOCHONDRIAL AND PROKARYOTIC PET112-RELATED"/>
    <property type="match status" value="1"/>
</dbReference>
<dbReference type="PANTHER" id="PTHR11659:SF0">
    <property type="entry name" value="GLUTAMYL-TRNA(GLN) AMIDOTRANSFERASE SUBUNIT B, MITOCHONDRIAL"/>
    <property type="match status" value="1"/>
</dbReference>
<dbReference type="Pfam" id="PF02934">
    <property type="entry name" value="GatB_N"/>
    <property type="match status" value="1"/>
</dbReference>
<dbReference type="Pfam" id="PF02637">
    <property type="entry name" value="GatB_Yqey"/>
    <property type="match status" value="1"/>
</dbReference>
<dbReference type="SMART" id="SM00845">
    <property type="entry name" value="GatB_Yqey"/>
    <property type="match status" value="1"/>
</dbReference>
<dbReference type="SUPFAM" id="SSF89095">
    <property type="entry name" value="GatB/YqeY motif"/>
    <property type="match status" value="1"/>
</dbReference>
<dbReference type="SUPFAM" id="SSF55931">
    <property type="entry name" value="Glutamine synthetase/guanido kinase"/>
    <property type="match status" value="1"/>
</dbReference>
<dbReference type="PROSITE" id="PS01234">
    <property type="entry name" value="GATB"/>
    <property type="match status" value="1"/>
</dbReference>
<sequence length="476" mass="52785">MEYEAVIGLEVHAELKTASKAFCSCSTAFGGEPNTHVCPVCLGLPGVLPVINRQVVEFGLKTALALNCRVAPFCKFDRKNYYYPDLPKNYQISQYDLPLATGGYLKINVDGQERVIGITRVHMEEDAGKLVHVDGPGGGYSLVDYNRTGVPLLEIVSEPDLRSPAEARAYMEKLRAILQYLDVSDCKMEEGSLRCDANVSVRPRGSQTFGTKTEVKNMNSFRALQRALEYEIERQIAILEGGGRVEQATMAWDESRGVTTVMRTKEQAHDYRYFPEPDLVPLEIDAAWIERVRRELPELPDARCRRLMDTFGLPAYDAGVITSSRDLADYFDRVVARYPDAKVVSNWIMGDFLRLLNARNLEPGQAPVPPEELADLLELQKEGTISGKIAKQVLEEMFASGKGARQIVQERGLVQISDTAALGKIVDEVLAANPNVVEDYRNGKEKALGFLVGQVMKATGGKANPGLVNKLLKERL</sequence>
<comment type="function">
    <text evidence="1">Allows the formation of correctly charged Asn-tRNA(Asn) or Gln-tRNA(Gln) through the transamidation of misacylated Asp-tRNA(Asn) or Glu-tRNA(Gln) in organisms which lack either or both of asparaginyl-tRNA or glutaminyl-tRNA synthetases. The reaction takes place in the presence of glutamine and ATP through an activated phospho-Asp-tRNA(Asn) or phospho-Glu-tRNA(Gln).</text>
</comment>
<comment type="catalytic activity">
    <reaction evidence="1">
        <text>L-glutamyl-tRNA(Gln) + L-glutamine + ATP + H2O = L-glutaminyl-tRNA(Gln) + L-glutamate + ADP + phosphate + H(+)</text>
        <dbReference type="Rhea" id="RHEA:17521"/>
        <dbReference type="Rhea" id="RHEA-COMP:9681"/>
        <dbReference type="Rhea" id="RHEA-COMP:9684"/>
        <dbReference type="ChEBI" id="CHEBI:15377"/>
        <dbReference type="ChEBI" id="CHEBI:15378"/>
        <dbReference type="ChEBI" id="CHEBI:29985"/>
        <dbReference type="ChEBI" id="CHEBI:30616"/>
        <dbReference type="ChEBI" id="CHEBI:43474"/>
        <dbReference type="ChEBI" id="CHEBI:58359"/>
        <dbReference type="ChEBI" id="CHEBI:78520"/>
        <dbReference type="ChEBI" id="CHEBI:78521"/>
        <dbReference type="ChEBI" id="CHEBI:456216"/>
    </reaction>
</comment>
<comment type="catalytic activity">
    <reaction evidence="1">
        <text>L-aspartyl-tRNA(Asn) + L-glutamine + ATP + H2O = L-asparaginyl-tRNA(Asn) + L-glutamate + ADP + phosphate + 2 H(+)</text>
        <dbReference type="Rhea" id="RHEA:14513"/>
        <dbReference type="Rhea" id="RHEA-COMP:9674"/>
        <dbReference type="Rhea" id="RHEA-COMP:9677"/>
        <dbReference type="ChEBI" id="CHEBI:15377"/>
        <dbReference type="ChEBI" id="CHEBI:15378"/>
        <dbReference type="ChEBI" id="CHEBI:29985"/>
        <dbReference type="ChEBI" id="CHEBI:30616"/>
        <dbReference type="ChEBI" id="CHEBI:43474"/>
        <dbReference type="ChEBI" id="CHEBI:58359"/>
        <dbReference type="ChEBI" id="CHEBI:78515"/>
        <dbReference type="ChEBI" id="CHEBI:78516"/>
        <dbReference type="ChEBI" id="CHEBI:456216"/>
    </reaction>
</comment>
<comment type="subunit">
    <text evidence="1">Heterotrimer of A, B and C subunits.</text>
</comment>
<comment type="similarity">
    <text evidence="1">Belongs to the GatB/GatE family. GatB subfamily.</text>
</comment>